<evidence type="ECO:0000255" key="1">
    <source>
        <dbReference type="HAMAP-Rule" id="MF_00231"/>
    </source>
</evidence>
<evidence type="ECO:0007829" key="2">
    <source>
        <dbReference type="PDB" id="2AHO"/>
    </source>
</evidence>
<evidence type="ECO:0007829" key="3">
    <source>
        <dbReference type="PDB" id="2QN6"/>
    </source>
</evidence>
<evidence type="ECO:0007829" key="4">
    <source>
        <dbReference type="PDB" id="3CW2"/>
    </source>
</evidence>
<evidence type="ECO:0007829" key="5">
    <source>
        <dbReference type="PDB" id="6SWC"/>
    </source>
</evidence>
<name>IF2A_SACS2</name>
<dbReference type="EMBL" id="AE006641">
    <property type="protein sequence ID" value="AAK41314.1"/>
    <property type="molecule type" value="Genomic_DNA"/>
</dbReference>
<dbReference type="PIR" id="C90257">
    <property type="entry name" value="C90257"/>
</dbReference>
<dbReference type="RefSeq" id="WP_009989173.1">
    <property type="nucleotide sequence ID" value="NC_002754.1"/>
</dbReference>
<dbReference type="PDB" id="2AHO">
    <property type="method" value="X-ray"/>
    <property type="resolution" value="3.00 A"/>
    <property type="chains" value="B=1-266"/>
</dbReference>
<dbReference type="PDB" id="2QMU">
    <property type="method" value="X-ray"/>
    <property type="resolution" value="3.20 A"/>
    <property type="chains" value="B=175-266"/>
</dbReference>
<dbReference type="PDB" id="2QN6">
    <property type="method" value="X-ray"/>
    <property type="resolution" value="2.15 A"/>
    <property type="chains" value="B=175-265"/>
</dbReference>
<dbReference type="PDB" id="3CW2">
    <property type="method" value="X-ray"/>
    <property type="resolution" value="2.80 A"/>
    <property type="chains" value="C/D/G/H=1-266"/>
</dbReference>
<dbReference type="PDB" id="3QSY">
    <property type="method" value="X-ray"/>
    <property type="resolution" value="3.20 A"/>
    <property type="chains" value="B=176-264"/>
</dbReference>
<dbReference type="PDB" id="3V11">
    <property type="method" value="X-ray"/>
    <property type="resolution" value="5.00 A"/>
    <property type="chains" value="B=1-266"/>
</dbReference>
<dbReference type="PDB" id="5JB3">
    <property type="method" value="EM"/>
    <property type="resolution" value="5.34 A"/>
    <property type="chains" value="9=1-266"/>
</dbReference>
<dbReference type="PDB" id="5JBH">
    <property type="method" value="EM"/>
    <property type="resolution" value="5.34 A"/>
    <property type="chains" value="9=1-266"/>
</dbReference>
<dbReference type="PDB" id="6SW9">
    <property type="method" value="EM"/>
    <property type="resolution" value="4.20 A"/>
    <property type="chains" value="9=1-264"/>
</dbReference>
<dbReference type="PDB" id="6SWC">
    <property type="method" value="EM"/>
    <property type="resolution" value="3.30 A"/>
    <property type="chains" value="9=1-266"/>
</dbReference>
<dbReference type="PDBsum" id="2AHO"/>
<dbReference type="PDBsum" id="2QMU"/>
<dbReference type="PDBsum" id="2QN6"/>
<dbReference type="PDBsum" id="3CW2"/>
<dbReference type="PDBsum" id="3QSY"/>
<dbReference type="PDBsum" id="3V11"/>
<dbReference type="PDBsum" id="5JB3"/>
<dbReference type="PDBsum" id="5JBH"/>
<dbReference type="PDBsum" id="6SW9"/>
<dbReference type="PDBsum" id="6SWC"/>
<dbReference type="EMDB" id="EMD-10320"/>
<dbReference type="EMDB" id="EMD-10322"/>
<dbReference type="EMDB" id="EMD-8148"/>
<dbReference type="EMDB" id="EMD-8149"/>
<dbReference type="SASBDB" id="Q97Z79"/>
<dbReference type="SMR" id="Q97Z79"/>
<dbReference type="DIP" id="DIP-29030N"/>
<dbReference type="FunCoup" id="Q97Z79">
    <property type="interactions" value="306"/>
</dbReference>
<dbReference type="IntAct" id="Q97Z79">
    <property type="interactions" value="2"/>
</dbReference>
<dbReference type="STRING" id="273057.SSO1050"/>
<dbReference type="PaxDb" id="273057-SSO1050"/>
<dbReference type="DNASU" id="1454093"/>
<dbReference type="EnsemblBacteria" id="AAK41314">
    <property type="protein sequence ID" value="AAK41314"/>
    <property type="gene ID" value="SSO1050"/>
</dbReference>
<dbReference type="KEGG" id="sso:SSO1050"/>
<dbReference type="PATRIC" id="fig|273057.12.peg.1046"/>
<dbReference type="eggNOG" id="arCOG04107">
    <property type="taxonomic scope" value="Archaea"/>
</dbReference>
<dbReference type="HOGENOM" id="CLU_033458_0_2_2"/>
<dbReference type="InParanoid" id="Q97Z79"/>
<dbReference type="PhylomeDB" id="Q97Z79"/>
<dbReference type="BRENDA" id="3.6.5.3">
    <property type="organism ID" value="6163"/>
</dbReference>
<dbReference type="EvolutionaryTrace" id="Q97Z79"/>
<dbReference type="Proteomes" id="UP000001974">
    <property type="component" value="Chromosome"/>
</dbReference>
<dbReference type="GO" id="GO:0043022">
    <property type="term" value="F:ribosome binding"/>
    <property type="evidence" value="ECO:0000318"/>
    <property type="project" value="GO_Central"/>
</dbReference>
<dbReference type="GO" id="GO:0003723">
    <property type="term" value="F:RNA binding"/>
    <property type="evidence" value="ECO:0007669"/>
    <property type="project" value="UniProtKB-UniRule"/>
</dbReference>
<dbReference type="GO" id="GO:0003743">
    <property type="term" value="F:translation initiation factor activity"/>
    <property type="evidence" value="ECO:0000318"/>
    <property type="project" value="GO_Central"/>
</dbReference>
<dbReference type="GO" id="GO:0006413">
    <property type="term" value="P:translational initiation"/>
    <property type="evidence" value="ECO:0000318"/>
    <property type="project" value="GO_Central"/>
</dbReference>
<dbReference type="CDD" id="cd04452">
    <property type="entry name" value="S1_IF2_alpha"/>
    <property type="match status" value="1"/>
</dbReference>
<dbReference type="FunFam" id="2.40.50.140:FF:000015">
    <property type="entry name" value="Eukaryotic translation initiation factor 2 subunit alpha"/>
    <property type="match status" value="1"/>
</dbReference>
<dbReference type="Gene3D" id="3.30.70.1130">
    <property type="entry name" value="EIF_2_alpha"/>
    <property type="match status" value="1"/>
</dbReference>
<dbReference type="Gene3D" id="2.40.50.140">
    <property type="entry name" value="Nucleic acid-binding proteins"/>
    <property type="match status" value="1"/>
</dbReference>
<dbReference type="Gene3D" id="1.10.150.190">
    <property type="entry name" value="Translation initiation factor 2, subunit 1, domain 2"/>
    <property type="match status" value="1"/>
</dbReference>
<dbReference type="HAMAP" id="MF_00231">
    <property type="entry name" value="eIF_2_alpha"/>
    <property type="match status" value="1"/>
</dbReference>
<dbReference type="InterPro" id="IPR012340">
    <property type="entry name" value="NA-bd_OB-fold"/>
</dbReference>
<dbReference type="InterPro" id="IPR003029">
    <property type="entry name" value="S1_domain"/>
</dbReference>
<dbReference type="InterPro" id="IPR044126">
    <property type="entry name" value="S1_IF2_alpha"/>
</dbReference>
<dbReference type="InterPro" id="IPR022964">
    <property type="entry name" value="TIF2_asu_arc"/>
</dbReference>
<dbReference type="InterPro" id="IPR024055">
    <property type="entry name" value="TIF2_asu_C"/>
</dbReference>
<dbReference type="InterPro" id="IPR024054">
    <property type="entry name" value="TIF2_asu_middle_sf"/>
</dbReference>
<dbReference type="InterPro" id="IPR011488">
    <property type="entry name" value="TIF_2_asu"/>
</dbReference>
<dbReference type="NCBIfam" id="NF003062">
    <property type="entry name" value="PRK03987.1-1"/>
    <property type="match status" value="1"/>
</dbReference>
<dbReference type="PANTHER" id="PTHR10602">
    <property type="entry name" value="EUKARYOTIC TRANSLATION INITIATION FACTOR 2 SUBUNIT 1"/>
    <property type="match status" value="1"/>
</dbReference>
<dbReference type="PANTHER" id="PTHR10602:SF0">
    <property type="entry name" value="EUKARYOTIC TRANSLATION INITIATION FACTOR 2 SUBUNIT 1"/>
    <property type="match status" value="1"/>
</dbReference>
<dbReference type="Pfam" id="PF07541">
    <property type="entry name" value="EIF_2_alpha"/>
    <property type="match status" value="1"/>
</dbReference>
<dbReference type="Pfam" id="PF00575">
    <property type="entry name" value="S1"/>
    <property type="match status" value="1"/>
</dbReference>
<dbReference type="SMART" id="SM00316">
    <property type="entry name" value="S1"/>
    <property type="match status" value="1"/>
</dbReference>
<dbReference type="SUPFAM" id="SSF110993">
    <property type="entry name" value="eIF-2-alpha, C-terminal domain"/>
    <property type="match status" value="1"/>
</dbReference>
<dbReference type="SUPFAM" id="SSF116742">
    <property type="entry name" value="eIF2alpha middle domain-like"/>
    <property type="match status" value="1"/>
</dbReference>
<dbReference type="SUPFAM" id="SSF50249">
    <property type="entry name" value="Nucleic acid-binding proteins"/>
    <property type="match status" value="1"/>
</dbReference>
<dbReference type="PROSITE" id="PS50126">
    <property type="entry name" value="S1"/>
    <property type="match status" value="1"/>
</dbReference>
<proteinExistence type="evidence at protein level"/>
<comment type="function">
    <text evidence="1">eIF-2 functions in the early steps of protein synthesis by forming a ternary complex with GTP and initiator tRNA.</text>
</comment>
<comment type="subunit">
    <text evidence="1">Heterotrimer composed of an alpha, a beta and a gamma chain.</text>
</comment>
<comment type="interaction">
    <interactant intactId="EBI-9010365">
        <id>Q97Z79</id>
    </interactant>
    <interactant intactId="EBI-9010337">
        <id>Q980A5</id>
        <label>eif2g</label>
    </interactant>
    <organismsDiffer>false</organismsDiffer>
    <experiments>2</experiments>
</comment>
<comment type="similarity">
    <text evidence="1">Belongs to the eIF-2-alpha family.</text>
</comment>
<feature type="chain" id="PRO_0000137402" description="Translation initiation factor 2 subunit alpha">
    <location>
        <begin position="1"/>
        <end position="266"/>
    </location>
</feature>
<feature type="domain" description="S1 motif" evidence="1">
    <location>
        <begin position="12"/>
        <end position="83"/>
    </location>
</feature>
<feature type="strand" evidence="4">
    <location>
        <begin position="5"/>
        <end position="8"/>
    </location>
</feature>
<feature type="strand" evidence="4">
    <location>
        <begin position="14"/>
        <end position="21"/>
    </location>
</feature>
<feature type="strand" evidence="4">
    <location>
        <begin position="24"/>
        <end position="31"/>
    </location>
</feature>
<feature type="turn" evidence="4">
    <location>
        <begin position="32"/>
        <end position="35"/>
    </location>
</feature>
<feature type="strand" evidence="2">
    <location>
        <begin position="37"/>
        <end position="41"/>
    </location>
</feature>
<feature type="helix" evidence="4">
    <location>
        <begin position="43"/>
        <end position="45"/>
    </location>
</feature>
<feature type="helix" evidence="4">
    <location>
        <begin position="54"/>
        <end position="57"/>
    </location>
</feature>
<feature type="strand" evidence="4">
    <location>
        <begin position="63"/>
        <end position="68"/>
    </location>
</feature>
<feature type="strand" evidence="4">
    <location>
        <begin position="73"/>
        <end position="75"/>
    </location>
</feature>
<feature type="strand" evidence="4">
    <location>
        <begin position="79"/>
        <end position="82"/>
    </location>
</feature>
<feature type="helix" evidence="4">
    <location>
        <begin position="89"/>
        <end position="113"/>
    </location>
</feature>
<feature type="helix" evidence="4">
    <location>
        <begin position="118"/>
        <end position="124"/>
    </location>
</feature>
<feature type="helix" evidence="4">
    <location>
        <begin position="126"/>
        <end position="130"/>
    </location>
</feature>
<feature type="strand" evidence="5">
    <location>
        <begin position="132"/>
        <end position="134"/>
    </location>
</feature>
<feature type="helix" evidence="4">
    <location>
        <begin position="136"/>
        <end position="146"/>
    </location>
</feature>
<feature type="helix" evidence="4">
    <location>
        <begin position="149"/>
        <end position="152"/>
    </location>
</feature>
<feature type="turn" evidence="4">
    <location>
        <begin position="153"/>
        <end position="155"/>
    </location>
</feature>
<feature type="helix" evidence="4">
    <location>
        <begin position="161"/>
        <end position="174"/>
    </location>
</feature>
<feature type="strand" evidence="3">
    <location>
        <begin position="177"/>
        <end position="187"/>
    </location>
</feature>
<feature type="turn" evidence="3">
    <location>
        <begin position="190"/>
        <end position="192"/>
    </location>
</feature>
<feature type="helix" evidence="3">
    <location>
        <begin position="193"/>
        <end position="204"/>
    </location>
</feature>
<feature type="helix" evidence="3">
    <location>
        <begin position="207"/>
        <end position="210"/>
    </location>
</feature>
<feature type="strand" evidence="3">
    <location>
        <begin position="214"/>
        <end position="223"/>
    </location>
</feature>
<feature type="strand" evidence="3">
    <location>
        <begin position="226"/>
        <end position="234"/>
    </location>
</feature>
<feature type="helix" evidence="3">
    <location>
        <begin position="236"/>
        <end position="256"/>
    </location>
</feature>
<feature type="strand" evidence="3">
    <location>
        <begin position="259"/>
        <end position="263"/>
    </location>
</feature>
<organism>
    <name type="scientific">Saccharolobus solfataricus (strain ATCC 35092 / DSM 1617 / JCM 11322 / P2)</name>
    <name type="common">Sulfolobus solfataricus</name>
    <dbReference type="NCBI Taxonomy" id="273057"/>
    <lineage>
        <taxon>Archaea</taxon>
        <taxon>Thermoproteota</taxon>
        <taxon>Thermoprotei</taxon>
        <taxon>Sulfolobales</taxon>
        <taxon>Sulfolobaceae</taxon>
        <taxon>Saccharolobus</taxon>
    </lineage>
</organism>
<sequence>MIYSRSKLPSEGEILIATVKQVFDYGSYVSLDEYGGLQAFLPWSEVSSKWVKNIRDVLKENRKVIVKVIRVDRRKGTVDVSLKKVTDDERRKKNLQWKKIQRLDKILELVSQKLKLSEKDAWEQVAWKLEAKYGDPITAIEKAVKEGEKILIDAGVPEIWVKPLLEEASKHAEERKVKMSGLITVRTNEPLGVEKIKEVISKALENIEQDYESLLNIKIYTIGAPRYRVDVVGTNPKEASEALNQIISNLIKIGKEENVDISVVKK</sequence>
<protein>
    <recommendedName>
        <fullName evidence="1">Translation initiation factor 2 subunit alpha</fullName>
    </recommendedName>
    <alternativeName>
        <fullName evidence="1">aIF2-alpha</fullName>
    </alternativeName>
    <alternativeName>
        <fullName evidence="1">eIF-2-alpha</fullName>
    </alternativeName>
</protein>
<reference key="1">
    <citation type="journal article" date="2001" name="Proc. Natl. Acad. Sci. U.S.A.">
        <title>The complete genome of the crenarchaeon Sulfolobus solfataricus P2.</title>
        <authorList>
            <person name="She Q."/>
            <person name="Singh R.K."/>
            <person name="Confalonieri F."/>
            <person name="Zivanovic Y."/>
            <person name="Allard G."/>
            <person name="Awayez M.J."/>
            <person name="Chan-Weiher C.C.-Y."/>
            <person name="Clausen I.G."/>
            <person name="Curtis B.A."/>
            <person name="De Moors A."/>
            <person name="Erauso G."/>
            <person name="Fletcher C."/>
            <person name="Gordon P.M.K."/>
            <person name="Heikamp-de Jong I."/>
            <person name="Jeffries A.C."/>
            <person name="Kozera C.J."/>
            <person name="Medina N."/>
            <person name="Peng X."/>
            <person name="Thi-Ngoc H.P."/>
            <person name="Redder P."/>
            <person name="Schenk M.E."/>
            <person name="Theriault C."/>
            <person name="Tolstrup N."/>
            <person name="Charlebois R.L."/>
            <person name="Doolittle W.F."/>
            <person name="Duguet M."/>
            <person name="Gaasterland T."/>
            <person name="Garrett R.A."/>
            <person name="Ragan M.A."/>
            <person name="Sensen C.W."/>
            <person name="Van der Oost J."/>
        </authorList>
    </citation>
    <scope>NUCLEOTIDE SEQUENCE [LARGE SCALE GENOMIC DNA]</scope>
    <source>
        <strain>ATCC 35092 / DSM 1617 / JCM 11322 / P2</strain>
    </source>
</reference>
<gene>
    <name evidence="1" type="primary">eif2a</name>
    <name type="synonym">aif2a</name>
    <name type="ordered locus">SSO1050</name>
</gene>
<accession>Q97Z79</accession>
<keyword id="KW-0002">3D-structure</keyword>
<keyword id="KW-0396">Initiation factor</keyword>
<keyword id="KW-0648">Protein biosynthesis</keyword>
<keyword id="KW-1185">Reference proteome</keyword>
<keyword id="KW-0694">RNA-binding</keyword>